<feature type="signal peptide" evidence="2">
    <location>
        <begin position="1"/>
        <end position="32"/>
    </location>
</feature>
<feature type="chain" id="PRO_0000040722" description="Glycoprotein 42">
    <location>
        <begin position="33"/>
        <end position="356"/>
    </location>
</feature>
<feature type="topological domain" description="Virion surface" evidence="2">
    <location>
        <begin position="33"/>
        <end position="331"/>
    </location>
</feature>
<feature type="transmembrane region" description="Helical" evidence="2">
    <location>
        <begin position="332"/>
        <end position="352"/>
    </location>
</feature>
<feature type="topological domain" description="Intravirion" evidence="2">
    <location>
        <begin position="353"/>
        <end position="356"/>
    </location>
</feature>
<feature type="region of interest" description="Disordered" evidence="3">
    <location>
        <begin position="247"/>
        <end position="279"/>
    </location>
</feature>
<feature type="short sequence motif" description="CXXC">
    <location>
        <begin position="306"/>
        <end position="309"/>
    </location>
</feature>
<feature type="compositionally biased region" description="Pro residues" evidence="3">
    <location>
        <begin position="254"/>
        <end position="263"/>
    </location>
</feature>
<feature type="glycosylation site" description="N-linked (GlcNAc...) asparagine; by host" evidence="2">
    <location>
        <position position="43"/>
    </location>
</feature>
<feature type="glycosylation site" description="N-linked (GlcNAc...) asparagine; by host" evidence="2">
    <location>
        <position position="58"/>
    </location>
</feature>
<feature type="glycosylation site" description="N-linked (GlcNAc...) asparagine; by host" evidence="2">
    <location>
        <position position="296"/>
    </location>
</feature>
<feature type="glycosylation site" description="N-linked (GlcNAc...) asparagine; by host" evidence="2">
    <location>
        <position position="328"/>
    </location>
</feature>
<organismHost>
    <name type="scientific">Mus musculus</name>
    <name type="common">Mouse</name>
    <dbReference type="NCBI Taxonomy" id="10090"/>
</organismHost>
<reference key="1">
    <citation type="journal article" date="1992" name="J. Virol.">
        <title>Mutations in the env gene of friend spleen focus-forming virus overcome Fv-2r-mediated resistance to Friend virus-induced erythroleukemia.</title>
        <authorList>
            <person name="Majumdar M.K."/>
            <person name="Cho C.L."/>
            <person name="Fox M.T."/>
            <person name="Eckner K.L."/>
            <person name="Kozak S."/>
            <person name="Kabat D."/>
            <person name="Geib R.W."/>
        </authorList>
    </citation>
    <scope>NUCLEOTIDE SEQUENCE [GENOMIC DNA]</scope>
</reference>
<sequence>MEGPAFSKPLKDKINPWGPLIVLGILIRAGVSVQRDSPHQVFNVTWRVTNLMTGQTANATSLLGTMTDAFPKLYFDLCDLIGNDWDETRLGCRTPGEGKRARTFDLYVCPGHTVPTGCGGPREGYCGKWGCETTGQAYWKPSSSWDLISLKRGNTPKDRGPCYDSSVSSGVQGATPGGRCNPLVLKFTDAGKKASWDAPKVWGLRLYRSTGTDPVTRFSLTRQVLNIGPRVPIGPNPVISDQLPPSRPAQIMLPRPPQPPPPGTASIVPETAPPSQQPGTRDRLLNLVNKAYQALNLTSPDKTQECWLCLVSRPPYYEGVAVLGTNSNHTTLISTIMGLLIILLLLLILLLWTLHS</sequence>
<keyword id="KW-1169">Fusion of virus membrane with host cell membrane</keyword>
<keyword id="KW-1168">Fusion of virus membrane with host membrane</keyword>
<keyword id="KW-0325">Glycoprotein</keyword>
<keyword id="KW-1032">Host cell membrane</keyword>
<keyword id="KW-1038">Host endoplasmic reticulum</keyword>
<keyword id="KW-1043">Host membrane</keyword>
<keyword id="KW-0945">Host-virus interaction</keyword>
<keyword id="KW-0472">Membrane</keyword>
<keyword id="KW-0553">Oncogene</keyword>
<keyword id="KW-0732">Signal</keyword>
<keyword id="KW-0812">Transmembrane</keyword>
<keyword id="KW-1133">Transmembrane helix</keyword>
<keyword id="KW-1161">Viral attachment to host cell</keyword>
<keyword id="KW-0261">Viral envelope protein</keyword>
<keyword id="KW-1162">Viral penetration into host cytoplasm</keyword>
<keyword id="KW-0946">Virion</keyword>
<keyword id="KW-1160">Virus entry into host cell</keyword>
<organism>
    <name type="scientific">Friend spleen focus-forming virus (strain BB6)</name>
    <name type="common">FSFFV</name>
    <dbReference type="NCBI Taxonomy" id="31692"/>
    <lineage>
        <taxon>Viruses</taxon>
        <taxon>Riboviria</taxon>
        <taxon>Pararnavirae</taxon>
        <taxon>Artverviricota</taxon>
        <taxon>Revtraviricetes</taxon>
        <taxon>Ortervirales</taxon>
        <taxon>Retroviridae</taxon>
        <taxon>Orthoretrovirinae</taxon>
        <taxon>Gammaretrovirus</taxon>
        <taxon>Spleen focus-forming virus</taxon>
    </lineage>
</organism>
<comment type="function">
    <text>This envelope-like membrane glycoprotein is responsible for ligand-independent activation of the erythropoietin receptor EPOR leading to the abnormally rapid proliferation of erythroid precursor cells. In the first stage of Friend disease, constitutive activation of the EPOR by gp42 causes uncontrolled, polyclonal proliferation of infected erythroblasts, leading to polycythemia (massive increase in the number of mature red cells). Host susceptibility to SSFV-induced erythroblastosis usually depends on the expression of the truncated isoform of MST1R receptor tyrosine kinase (MST1R isoform sf-Stk), but the deletion mutant BB6 apparently can overcome its absence.</text>
</comment>
<comment type="subunit">
    <text>Homooligomer. Forms heterooligomers with mouse EPOR, probably via their respective transmembrane domains. BB6 deletion mutant does not interact with mouse MST1R isoform sf-Stk.</text>
</comment>
<comment type="subcellular location">
    <subcellularLocation>
        <location>Host endoplasmic reticulum membrane</location>
        <topology>Single-pass type I membrane protein</topology>
    </subcellularLocation>
    <subcellularLocation>
        <location>Host cell membrane</location>
        <topology>Single-pass type I membrane protein</topology>
    </subcellularLocation>
    <subcellularLocation>
        <location>Virion membrane</location>
        <topology>Single-pass type I membrane protein</topology>
    </subcellularLocation>
    <text evidence="1">The envelope-like membrane glycoprotein gp55 is defective in its transport to the cell surface and remains associated predominantly with the rough endoplasmic reticulum (RER) membrane. It is almost not incorporated into virions. Host cell surface expression appears to be a prerequisite for its leukemogenicity (By similarity).</text>
</comment>
<comment type="miscellaneous">
    <text>Compared to other gammaretroviruses which possess 2 envelope proteins (gp70 and p15E), FSFFV gp55 corresponds to a gp70-p15E fusion protein with a deletion of a portion of p15E. It is encoded by the defective env gene of the virus. Strain BB6 gp42 is a truncated form of gp55.</text>
</comment>
<comment type="miscellaneous">
    <text>The Friend murine leukemia virus complex induces a rapid and fatal erythroleukemia in adult mice. It is the replication-defective spleen focus-forming virus (SFFV) contained in this complex that causes foci of proliferating erythroid cells in spleens of infected mice. The second component is a replication competent Friend murine leukemia virus (F-MuLV) that serves as a helper virus for SFFV.</text>
</comment>
<gene>
    <name type="primary">env</name>
</gene>
<evidence type="ECO:0000250" key="1"/>
<evidence type="ECO:0000255" key="2"/>
<evidence type="ECO:0000256" key="3">
    <source>
        <dbReference type="SAM" id="MobiDB-lite"/>
    </source>
</evidence>
<proteinExistence type="inferred from homology"/>
<accession>P31793</accession>
<protein>
    <recommendedName>
        <fullName>Glycoprotein 42</fullName>
        <shortName>gp42</shortName>
    </recommendedName>
</protein>
<name>ENV_FRSFB</name>
<dbReference type="EMBL" id="M90673">
    <property type="status" value="NOT_ANNOTATED_CDS"/>
    <property type="molecule type" value="Genomic_DNA"/>
</dbReference>
<dbReference type="PIR" id="A41995">
    <property type="entry name" value="VCVWB6"/>
</dbReference>
<dbReference type="SMR" id="P31793"/>
<dbReference type="GlyCosmos" id="P31793">
    <property type="glycosylation" value="4 sites, No reported glycans"/>
</dbReference>
<dbReference type="GO" id="GO:0044167">
    <property type="term" value="C:host cell endoplasmic reticulum membrane"/>
    <property type="evidence" value="ECO:0007669"/>
    <property type="project" value="UniProtKB-SubCell"/>
</dbReference>
<dbReference type="GO" id="GO:0020002">
    <property type="term" value="C:host cell plasma membrane"/>
    <property type="evidence" value="ECO:0007669"/>
    <property type="project" value="UniProtKB-SubCell"/>
</dbReference>
<dbReference type="GO" id="GO:0016020">
    <property type="term" value="C:membrane"/>
    <property type="evidence" value="ECO:0007669"/>
    <property type="project" value="UniProtKB-KW"/>
</dbReference>
<dbReference type="GO" id="GO:0019031">
    <property type="term" value="C:viral envelope"/>
    <property type="evidence" value="ECO:0007669"/>
    <property type="project" value="UniProtKB-KW"/>
</dbReference>
<dbReference type="GO" id="GO:0055036">
    <property type="term" value="C:virion membrane"/>
    <property type="evidence" value="ECO:0007669"/>
    <property type="project" value="UniProtKB-SubCell"/>
</dbReference>
<dbReference type="GO" id="GO:0019064">
    <property type="term" value="P:fusion of virus membrane with host plasma membrane"/>
    <property type="evidence" value="ECO:0007669"/>
    <property type="project" value="UniProtKB-KW"/>
</dbReference>
<dbReference type="GO" id="GO:0046718">
    <property type="term" value="P:symbiont entry into host cell"/>
    <property type="evidence" value="ECO:0007669"/>
    <property type="project" value="UniProtKB-KW"/>
</dbReference>
<dbReference type="GO" id="GO:0019062">
    <property type="term" value="P:virion attachment to host cell"/>
    <property type="evidence" value="ECO:0007669"/>
    <property type="project" value="UniProtKB-KW"/>
</dbReference>
<dbReference type="Gene3D" id="3.90.310.10">
    <property type="entry name" value="ENV polyprotein, receptor-binding domain"/>
    <property type="match status" value="1"/>
</dbReference>
<dbReference type="InterPro" id="IPR008981">
    <property type="entry name" value="FMuLV_rcpt-bd"/>
</dbReference>
<dbReference type="InterPro" id="IPR018154">
    <property type="entry name" value="TLV/ENV_coat_polyprotein"/>
</dbReference>
<dbReference type="PANTHER" id="PTHR10424:SF72">
    <property type="entry name" value="BC035947 PROTEIN-RELATED"/>
    <property type="match status" value="1"/>
</dbReference>
<dbReference type="PANTHER" id="PTHR10424">
    <property type="entry name" value="VIRAL ENVELOPE PROTEIN"/>
    <property type="match status" value="1"/>
</dbReference>
<dbReference type="Pfam" id="PF00429">
    <property type="entry name" value="TLV_coat"/>
    <property type="match status" value="2"/>
</dbReference>
<dbReference type="SUPFAM" id="SSF49830">
    <property type="entry name" value="ENV polyprotein, receptor-binding domain"/>
    <property type="match status" value="1"/>
</dbReference>